<protein>
    <recommendedName>
        <fullName evidence="1 3">Epoxyqueuosine reductase QueH</fullName>
        <ecNumber evidence="1 5">1.17.99.6</ecNumber>
    </recommendedName>
    <alternativeName>
        <fullName evidence="1 4">Queuosine biosynthesis protein QueH</fullName>
    </alternativeName>
</protein>
<reference key="1">
    <citation type="journal article" date="2005" name="Science">
        <title>Genome sequence of the PCE-dechlorinating bacterium Dehalococcoides ethenogenes.</title>
        <authorList>
            <person name="Seshadri R."/>
            <person name="Adrian L."/>
            <person name="Fouts D.E."/>
            <person name="Eisen J.A."/>
            <person name="Phillippy A.M."/>
            <person name="Methe B.A."/>
            <person name="Ward N.L."/>
            <person name="Nelson W.C."/>
            <person name="DeBoy R.T."/>
            <person name="Khouri H.M."/>
            <person name="Kolonay J.F."/>
            <person name="Dodson R.J."/>
            <person name="Daugherty S.C."/>
            <person name="Brinkac L.M."/>
            <person name="Sullivan S.A."/>
            <person name="Madupu R."/>
            <person name="Nelson K.E."/>
            <person name="Kang K.H."/>
            <person name="Impraim M."/>
            <person name="Tran K."/>
            <person name="Robinson J.M."/>
            <person name="Forberger H.A."/>
            <person name="Fraser C.M."/>
            <person name="Zinder S.H."/>
            <person name="Heidelberg J.F."/>
        </authorList>
    </citation>
    <scope>NUCLEOTIDE SEQUENCE [LARGE SCALE GENOMIC DNA]</scope>
    <source>
        <strain>ATCC BAA-2266 / KCTC 15142 / 195</strain>
    </source>
</reference>
<reference key="2">
    <citation type="journal article" date="2017" name="ACS Chem. Biol.">
        <title>Identification of a novel epoxyqueuosine reductase family by comparative genomics.</title>
        <authorList>
            <person name="Zallot R."/>
            <person name="Ross R."/>
            <person name="Chen W.H."/>
            <person name="Bruner S.D."/>
            <person name="Limbach P.A."/>
            <person name="de Crecy-Lagard V."/>
        </authorList>
    </citation>
    <scope>FUNCTION</scope>
    <scope>CATALYTIC ACTIVITY</scope>
    <scope>PATHWAY</scope>
    <source>
        <strain>ATCC BAA-2266 / KCTC 15142 / 195</strain>
    </source>
</reference>
<accession>Q3Z8V0</accession>
<name>QUEH_DEHM1</name>
<keyword id="KW-0004">4Fe-4S</keyword>
<keyword id="KW-1015">Disulfide bond</keyword>
<keyword id="KW-0408">Iron</keyword>
<keyword id="KW-0411">Iron-sulfur</keyword>
<keyword id="KW-0479">Metal-binding</keyword>
<keyword id="KW-0560">Oxidoreductase</keyword>
<keyword id="KW-0671">Queuosine biosynthesis</keyword>
<keyword id="KW-0676">Redox-active center</keyword>
<keyword id="KW-0819">tRNA processing</keyword>
<feature type="chain" id="PRO_0000439900" description="Epoxyqueuosine reductase QueH">
    <location>
        <begin position="1"/>
        <end position="182"/>
    </location>
</feature>
<feature type="binding site" evidence="1">
    <location>
        <position position="10"/>
    </location>
    <ligand>
        <name>[4Fe-4S] cluster</name>
        <dbReference type="ChEBI" id="CHEBI:49883"/>
    </ligand>
</feature>
<feature type="binding site" evidence="1">
    <location>
        <position position="11"/>
    </location>
    <ligand>
        <name>[4Fe-4S] cluster</name>
        <dbReference type="ChEBI" id="CHEBI:49883"/>
    </ligand>
</feature>
<feature type="binding site" evidence="1">
    <location>
        <position position="85"/>
    </location>
    <ligand>
        <name>[4Fe-4S] cluster</name>
        <dbReference type="ChEBI" id="CHEBI:49883"/>
    </ligand>
</feature>
<feature type="binding site" evidence="1">
    <location>
        <position position="88"/>
    </location>
    <ligand>
        <name>[4Fe-4S] cluster</name>
        <dbReference type="ChEBI" id="CHEBI:49883"/>
    </ligand>
</feature>
<feature type="disulfide bond" description="Redox-active" evidence="1">
    <location>
        <begin position="165"/>
        <end position="167"/>
    </location>
</feature>
<sequence>MAPKLLLHGCCAHCTAYSFKYWQEQGFAVSVYWYNPNIHPFMEHQSRLEAMRKLSAEMGFELITEPSYHMAEYFKNVSANVDGRCRICFDMRLGQTAAYAAGHGYEYFSSSLFISPHQKHQDAVCSAEALAKETGVRFAYADLRKRYSDSRHITKPLDLYRQQYCGCVYSEYERFGKPNSPA</sequence>
<comment type="function">
    <text evidence="1 2">Catalyzes the conversion of epoxyqueuosine (oQ) to queuosine (Q), which is a hypermodified base found in the wobble positions of tRNA(Asp), tRNA(Asn), tRNA(His) and tRNA(Tyr).</text>
</comment>
<comment type="catalytic activity">
    <reaction evidence="1 5">
        <text>epoxyqueuosine(34) in tRNA + AH2 = queuosine(34) in tRNA + A + H2O</text>
        <dbReference type="Rhea" id="RHEA:32159"/>
        <dbReference type="Rhea" id="RHEA-COMP:18571"/>
        <dbReference type="Rhea" id="RHEA-COMP:18582"/>
        <dbReference type="ChEBI" id="CHEBI:13193"/>
        <dbReference type="ChEBI" id="CHEBI:15377"/>
        <dbReference type="ChEBI" id="CHEBI:17499"/>
        <dbReference type="ChEBI" id="CHEBI:194431"/>
        <dbReference type="ChEBI" id="CHEBI:194443"/>
        <dbReference type="EC" id="1.17.99.6"/>
    </reaction>
</comment>
<comment type="pathway">
    <text evidence="1 5">tRNA modification; tRNA-queuosine biosynthesis.</text>
</comment>
<comment type="similarity">
    <text evidence="1 4">Belongs to the QueH family.</text>
</comment>
<evidence type="ECO:0000255" key="1">
    <source>
        <dbReference type="HAMAP-Rule" id="MF_02089"/>
    </source>
</evidence>
<evidence type="ECO:0000269" key="2">
    <source>
    </source>
</evidence>
<evidence type="ECO:0000303" key="3">
    <source>
    </source>
</evidence>
<evidence type="ECO:0000305" key="4"/>
<evidence type="ECO:0000305" key="5">
    <source>
    </source>
</evidence>
<evidence type="ECO:0000312" key="6">
    <source>
        <dbReference type="EMBL" id="AAW40085.1"/>
    </source>
</evidence>
<proteinExistence type="evidence at protein level"/>
<gene>
    <name evidence="1 3" type="primary">queH</name>
    <name evidence="6" type="ordered locus">DET0607</name>
</gene>
<dbReference type="EC" id="1.17.99.6" evidence="1 5"/>
<dbReference type="EMBL" id="CP000027">
    <property type="protein sequence ID" value="AAW40085.1"/>
    <property type="molecule type" value="Genomic_DNA"/>
</dbReference>
<dbReference type="RefSeq" id="WP_010936382.1">
    <property type="nucleotide sequence ID" value="NC_002936.3"/>
</dbReference>
<dbReference type="SMR" id="Q3Z8V0"/>
<dbReference type="STRING" id="243164.DET0607"/>
<dbReference type="DNASU" id="3230048"/>
<dbReference type="GeneID" id="3230048"/>
<dbReference type="KEGG" id="det:DET0607"/>
<dbReference type="PATRIC" id="fig|243164.10.peg.584"/>
<dbReference type="eggNOG" id="COG1636">
    <property type="taxonomic scope" value="Bacteria"/>
</dbReference>
<dbReference type="HOGENOM" id="CLU_088177_1_1_0"/>
<dbReference type="InParanoid" id="Q3Z8V0"/>
<dbReference type="UniPathway" id="UPA00392"/>
<dbReference type="Proteomes" id="UP000008289">
    <property type="component" value="Chromosome"/>
</dbReference>
<dbReference type="GO" id="GO:0051539">
    <property type="term" value="F:4 iron, 4 sulfur cluster binding"/>
    <property type="evidence" value="ECO:0007669"/>
    <property type="project" value="UniProtKB-UniRule"/>
</dbReference>
<dbReference type="GO" id="GO:0052693">
    <property type="term" value="F:epoxyqueuosine reductase activity"/>
    <property type="evidence" value="ECO:0007669"/>
    <property type="project" value="UniProtKB-UniRule"/>
</dbReference>
<dbReference type="GO" id="GO:0046872">
    <property type="term" value="F:metal ion binding"/>
    <property type="evidence" value="ECO:0007669"/>
    <property type="project" value="UniProtKB-KW"/>
</dbReference>
<dbReference type="GO" id="GO:0008616">
    <property type="term" value="P:queuosine biosynthetic process"/>
    <property type="evidence" value="ECO:0007669"/>
    <property type="project" value="UniProtKB-UniRule"/>
</dbReference>
<dbReference type="GO" id="GO:0006400">
    <property type="term" value="P:tRNA modification"/>
    <property type="evidence" value="ECO:0007669"/>
    <property type="project" value="UniProtKB-UniRule"/>
</dbReference>
<dbReference type="HAMAP" id="MF_02089">
    <property type="entry name" value="QueH"/>
    <property type="match status" value="1"/>
</dbReference>
<dbReference type="InterPro" id="IPR003828">
    <property type="entry name" value="QueH"/>
</dbReference>
<dbReference type="PANTHER" id="PTHR36701">
    <property type="entry name" value="EPOXYQUEUOSINE REDUCTASE QUEH"/>
    <property type="match status" value="1"/>
</dbReference>
<dbReference type="PANTHER" id="PTHR36701:SF1">
    <property type="entry name" value="EPOXYQUEUOSINE REDUCTASE QUEH"/>
    <property type="match status" value="1"/>
</dbReference>
<dbReference type="Pfam" id="PF02677">
    <property type="entry name" value="QueH"/>
    <property type="match status" value="1"/>
</dbReference>
<organism>
    <name type="scientific">Dehalococcoides mccartyi (strain ATCC BAA-2266 / KCTC 15142 / 195)</name>
    <name type="common">Dehalococcoides ethenogenes (strain 195)</name>
    <dbReference type="NCBI Taxonomy" id="243164"/>
    <lineage>
        <taxon>Bacteria</taxon>
        <taxon>Bacillati</taxon>
        <taxon>Chloroflexota</taxon>
        <taxon>Dehalococcoidia</taxon>
        <taxon>Dehalococcoidales</taxon>
        <taxon>Dehalococcoidaceae</taxon>
        <taxon>Dehalococcoides</taxon>
    </lineage>
</organism>